<accession>Q7N8Q7</accession>
<feature type="chain" id="PRO_0000163043" description="NADPH-dependent 7-cyano-7-deazaguanine reductase">
    <location>
        <begin position="1"/>
        <end position="282"/>
    </location>
</feature>
<feature type="active site" description="Thioimide intermediate" evidence="1">
    <location>
        <position position="189"/>
    </location>
</feature>
<feature type="active site" description="Proton donor" evidence="1">
    <location>
        <position position="196"/>
    </location>
</feature>
<feature type="binding site" evidence="1">
    <location>
        <begin position="88"/>
        <end position="90"/>
    </location>
    <ligand>
        <name>substrate</name>
    </ligand>
</feature>
<feature type="binding site" evidence="1">
    <location>
        <begin position="90"/>
        <end position="91"/>
    </location>
    <ligand>
        <name>NADPH</name>
        <dbReference type="ChEBI" id="CHEBI:57783"/>
    </ligand>
</feature>
<feature type="binding site" evidence="1">
    <location>
        <begin position="228"/>
        <end position="229"/>
    </location>
    <ligand>
        <name>substrate</name>
    </ligand>
</feature>
<feature type="binding site" evidence="1">
    <location>
        <begin position="257"/>
        <end position="258"/>
    </location>
    <ligand>
        <name>NADPH</name>
        <dbReference type="ChEBI" id="CHEBI:57783"/>
    </ligand>
</feature>
<proteinExistence type="inferred from homology"/>
<name>QUEF_PHOLL</name>
<reference key="1">
    <citation type="journal article" date="2003" name="Nat. Biotechnol.">
        <title>The genome sequence of the entomopathogenic bacterium Photorhabdus luminescens.</title>
        <authorList>
            <person name="Duchaud E."/>
            <person name="Rusniok C."/>
            <person name="Frangeul L."/>
            <person name="Buchrieser C."/>
            <person name="Givaudan A."/>
            <person name="Taourit S."/>
            <person name="Bocs S."/>
            <person name="Boursaux-Eude C."/>
            <person name="Chandler M."/>
            <person name="Charles J.-F."/>
            <person name="Dassa E."/>
            <person name="Derose R."/>
            <person name="Derzelle S."/>
            <person name="Freyssinet G."/>
            <person name="Gaudriault S."/>
            <person name="Medigue C."/>
            <person name="Lanois A."/>
            <person name="Powell K."/>
            <person name="Siguier P."/>
            <person name="Vincent R."/>
            <person name="Wingate V."/>
            <person name="Zouine M."/>
            <person name="Glaser P."/>
            <person name="Boemare N."/>
            <person name="Danchin A."/>
            <person name="Kunst F."/>
        </authorList>
    </citation>
    <scope>NUCLEOTIDE SEQUENCE [LARGE SCALE GENOMIC DNA]</scope>
    <source>
        <strain>DSM 15139 / CIP 105565 / TT01</strain>
    </source>
</reference>
<comment type="function">
    <text evidence="1">Catalyzes the NADPH-dependent reduction of 7-cyano-7-deazaguanine (preQ0) to 7-aminomethyl-7-deazaguanine (preQ1).</text>
</comment>
<comment type="catalytic activity">
    <reaction evidence="1">
        <text>7-aminomethyl-7-carbaguanine + 2 NADP(+) = 7-cyano-7-deazaguanine + 2 NADPH + 3 H(+)</text>
        <dbReference type="Rhea" id="RHEA:13409"/>
        <dbReference type="ChEBI" id="CHEBI:15378"/>
        <dbReference type="ChEBI" id="CHEBI:45075"/>
        <dbReference type="ChEBI" id="CHEBI:57783"/>
        <dbReference type="ChEBI" id="CHEBI:58349"/>
        <dbReference type="ChEBI" id="CHEBI:58703"/>
        <dbReference type="EC" id="1.7.1.13"/>
    </reaction>
</comment>
<comment type="pathway">
    <text evidence="1">tRNA modification; tRNA-queuosine biosynthesis.</text>
</comment>
<comment type="subunit">
    <text evidence="1">Homodimer.</text>
</comment>
<comment type="subcellular location">
    <subcellularLocation>
        <location evidence="1">Cytoplasm</location>
    </subcellularLocation>
</comment>
<comment type="similarity">
    <text evidence="1">Belongs to the GTP cyclohydrolase I family. QueF type 2 subfamily.</text>
</comment>
<protein>
    <recommendedName>
        <fullName evidence="1">NADPH-dependent 7-cyano-7-deazaguanine reductase</fullName>
        <ecNumber evidence="1">1.7.1.13</ecNumber>
    </recommendedName>
    <alternativeName>
        <fullName evidence="1">7-cyano-7-carbaguanine reductase</fullName>
    </alternativeName>
    <alternativeName>
        <fullName evidence="1">NADPH-dependent nitrile oxidoreductase</fullName>
    </alternativeName>
    <alternativeName>
        <fullName evidence="1">PreQ(0) reductase</fullName>
    </alternativeName>
</protein>
<sequence length="282" mass="32582">MSLYRDHQALEQLTLGKTTLYRDQYDASLLQAVPRNMNREPLEIFPDNLPFHGADIWTLYELSWLNNRGLPQVAVGHVSLNAASTNLIESKSFKLYLNSFNQTRFENWQAVEETLQRDLAACAEGEVEVALHHLDHFNNQPISTFTGECIDDQDIEVTEYDFNRHYLQNAAQGPQVEEVLVSHLLKSNCLITHQPDWGSVQIHYKGSKINREALLRYLISFRHHNEFHEQCVERIFSDLQQLCAPEKLSVYARYTRRGGLDINPWRTNSEGFVPATGRLARQ</sequence>
<dbReference type="EC" id="1.7.1.13" evidence="1"/>
<dbReference type="EMBL" id="BX571861">
    <property type="protein sequence ID" value="CAE12957.1"/>
    <property type="molecule type" value="Genomic_DNA"/>
</dbReference>
<dbReference type="RefSeq" id="WP_011145038.1">
    <property type="nucleotide sequence ID" value="NC_005126.1"/>
</dbReference>
<dbReference type="SMR" id="Q7N8Q7"/>
<dbReference type="STRING" id="243265.plu0662"/>
<dbReference type="GeneID" id="48846950"/>
<dbReference type="KEGG" id="plu:plu0662"/>
<dbReference type="eggNOG" id="COG0780">
    <property type="taxonomic scope" value="Bacteria"/>
</dbReference>
<dbReference type="eggNOG" id="COG2904">
    <property type="taxonomic scope" value="Bacteria"/>
</dbReference>
<dbReference type="HOGENOM" id="CLU_054738_0_0_6"/>
<dbReference type="OrthoDB" id="9789995at2"/>
<dbReference type="UniPathway" id="UPA00392"/>
<dbReference type="Proteomes" id="UP000002514">
    <property type="component" value="Chromosome"/>
</dbReference>
<dbReference type="GO" id="GO:0005737">
    <property type="term" value="C:cytoplasm"/>
    <property type="evidence" value="ECO:0007669"/>
    <property type="project" value="UniProtKB-SubCell"/>
</dbReference>
<dbReference type="GO" id="GO:0033739">
    <property type="term" value="F:preQ1 synthase activity"/>
    <property type="evidence" value="ECO:0007669"/>
    <property type="project" value="UniProtKB-UniRule"/>
</dbReference>
<dbReference type="GO" id="GO:0008616">
    <property type="term" value="P:queuosine biosynthetic process"/>
    <property type="evidence" value="ECO:0007669"/>
    <property type="project" value="UniProtKB-UniRule"/>
</dbReference>
<dbReference type="GO" id="GO:0006400">
    <property type="term" value="P:tRNA modification"/>
    <property type="evidence" value="ECO:0007669"/>
    <property type="project" value="UniProtKB-UniRule"/>
</dbReference>
<dbReference type="Gene3D" id="3.30.1130.10">
    <property type="match status" value="2"/>
</dbReference>
<dbReference type="HAMAP" id="MF_00817">
    <property type="entry name" value="QueF_type2"/>
    <property type="match status" value="1"/>
</dbReference>
<dbReference type="InterPro" id="IPR043133">
    <property type="entry name" value="GTP-CH-I_C/QueF"/>
</dbReference>
<dbReference type="InterPro" id="IPR050084">
    <property type="entry name" value="NADPH_dep_7-cyano-7-deazaG_red"/>
</dbReference>
<dbReference type="InterPro" id="IPR029500">
    <property type="entry name" value="QueF"/>
</dbReference>
<dbReference type="InterPro" id="IPR029139">
    <property type="entry name" value="QueF_N"/>
</dbReference>
<dbReference type="InterPro" id="IPR016428">
    <property type="entry name" value="QueF_type2"/>
</dbReference>
<dbReference type="NCBIfam" id="TIGR03138">
    <property type="entry name" value="QueF"/>
    <property type="match status" value="1"/>
</dbReference>
<dbReference type="PANTHER" id="PTHR34354">
    <property type="entry name" value="NADPH-DEPENDENT 7-CYANO-7-DEAZAGUANINE REDUCTASE"/>
    <property type="match status" value="1"/>
</dbReference>
<dbReference type="PANTHER" id="PTHR34354:SF1">
    <property type="entry name" value="NADPH-DEPENDENT 7-CYANO-7-DEAZAGUANINE REDUCTASE"/>
    <property type="match status" value="1"/>
</dbReference>
<dbReference type="Pfam" id="PF14489">
    <property type="entry name" value="QueF"/>
    <property type="match status" value="1"/>
</dbReference>
<dbReference type="Pfam" id="PF14819">
    <property type="entry name" value="QueF_N"/>
    <property type="match status" value="1"/>
</dbReference>
<dbReference type="PIRSF" id="PIRSF004750">
    <property type="entry name" value="Nitrile_oxidored_YqcD_prd"/>
    <property type="match status" value="1"/>
</dbReference>
<dbReference type="SUPFAM" id="SSF55620">
    <property type="entry name" value="Tetrahydrobiopterin biosynthesis enzymes-like"/>
    <property type="match status" value="1"/>
</dbReference>
<evidence type="ECO:0000255" key="1">
    <source>
        <dbReference type="HAMAP-Rule" id="MF_00817"/>
    </source>
</evidence>
<gene>
    <name evidence="1" type="primary">queF</name>
    <name type="ordered locus">plu0662</name>
</gene>
<organism>
    <name type="scientific">Photorhabdus laumondii subsp. laumondii (strain DSM 15139 / CIP 105565 / TT01)</name>
    <name type="common">Photorhabdus luminescens subsp. laumondii</name>
    <dbReference type="NCBI Taxonomy" id="243265"/>
    <lineage>
        <taxon>Bacteria</taxon>
        <taxon>Pseudomonadati</taxon>
        <taxon>Pseudomonadota</taxon>
        <taxon>Gammaproteobacteria</taxon>
        <taxon>Enterobacterales</taxon>
        <taxon>Morganellaceae</taxon>
        <taxon>Photorhabdus</taxon>
    </lineage>
</organism>
<keyword id="KW-0963">Cytoplasm</keyword>
<keyword id="KW-0521">NADP</keyword>
<keyword id="KW-0560">Oxidoreductase</keyword>
<keyword id="KW-0671">Queuosine biosynthesis</keyword>
<keyword id="KW-1185">Reference proteome</keyword>